<reference key="1">
    <citation type="journal article" date="2010" name="Genome Biol. Evol.">
        <title>Continuing evolution of Burkholderia mallei through genome reduction and large-scale rearrangements.</title>
        <authorList>
            <person name="Losada L."/>
            <person name="Ronning C.M."/>
            <person name="DeShazer D."/>
            <person name="Woods D."/>
            <person name="Fedorova N."/>
            <person name="Kim H.S."/>
            <person name="Shabalina S.A."/>
            <person name="Pearson T.R."/>
            <person name="Brinkac L."/>
            <person name="Tan P."/>
            <person name="Nandi T."/>
            <person name="Crabtree J."/>
            <person name="Badger J."/>
            <person name="Beckstrom-Sternberg S."/>
            <person name="Saqib M."/>
            <person name="Schutzer S.E."/>
            <person name="Keim P."/>
            <person name="Nierman W.C."/>
        </authorList>
    </citation>
    <scope>NUCLEOTIDE SEQUENCE [LARGE SCALE GENOMIC DNA]</scope>
    <source>
        <strain>NCTC 10247</strain>
    </source>
</reference>
<protein>
    <recommendedName>
        <fullName evidence="1">Cytidylate kinase</fullName>
        <shortName evidence="1">CK</shortName>
        <ecNumber evidence="1">2.7.4.25</ecNumber>
    </recommendedName>
    <alternativeName>
        <fullName evidence="1">Cytidine monophosphate kinase</fullName>
        <shortName evidence="1">CMP kinase</shortName>
    </alternativeName>
</protein>
<accession>A3MHN9</accession>
<evidence type="ECO:0000255" key="1">
    <source>
        <dbReference type="HAMAP-Rule" id="MF_00238"/>
    </source>
</evidence>
<organism>
    <name type="scientific">Burkholderia mallei (strain NCTC 10247)</name>
    <dbReference type="NCBI Taxonomy" id="320389"/>
    <lineage>
        <taxon>Bacteria</taxon>
        <taxon>Pseudomonadati</taxon>
        <taxon>Pseudomonadota</taxon>
        <taxon>Betaproteobacteria</taxon>
        <taxon>Burkholderiales</taxon>
        <taxon>Burkholderiaceae</taxon>
        <taxon>Burkholderia</taxon>
        <taxon>pseudomallei group</taxon>
    </lineage>
</organism>
<feature type="chain" id="PRO_1000048196" description="Cytidylate kinase">
    <location>
        <begin position="1"/>
        <end position="228"/>
    </location>
</feature>
<feature type="binding site" evidence="1">
    <location>
        <begin position="17"/>
        <end position="25"/>
    </location>
    <ligand>
        <name>ATP</name>
        <dbReference type="ChEBI" id="CHEBI:30616"/>
    </ligand>
</feature>
<keyword id="KW-0067">ATP-binding</keyword>
<keyword id="KW-0963">Cytoplasm</keyword>
<keyword id="KW-0418">Kinase</keyword>
<keyword id="KW-0547">Nucleotide-binding</keyword>
<keyword id="KW-0808">Transferase</keyword>
<name>KCY_BURM7</name>
<sequence length="228" mass="24367">MKSTRPFHPTPVITIDGPTASGKGTVAALVAAHLGFHLLDSGALYRLAALASIRYQVEPDDADALASLVDGLHITFREGCAQLDGVDVSDEIRAEAVGNRASAIAVHASVRAALVARQRAFRKTPGLVADGRDMGTLIFPDAVLKVFLTASVEARAARRHKQLMQKGFSANIDNLLQDLRERDARDSNRAAAPLKPAADAKPLDTSALTIEQSVEQVLAWYRELGQPA</sequence>
<gene>
    <name evidence="1" type="primary">cmk</name>
    <name type="ordered locus">BMA10247_0200</name>
</gene>
<proteinExistence type="inferred from homology"/>
<dbReference type="EC" id="2.7.4.25" evidence="1"/>
<dbReference type="EMBL" id="CP000548">
    <property type="protein sequence ID" value="ABO04174.1"/>
    <property type="molecule type" value="Genomic_DNA"/>
</dbReference>
<dbReference type="RefSeq" id="WP_004189396.1">
    <property type="nucleotide sequence ID" value="NZ_CP007802.1"/>
</dbReference>
<dbReference type="SMR" id="A3MHN9"/>
<dbReference type="GeneID" id="92978200"/>
<dbReference type="KEGG" id="bmaz:BM44_2791"/>
<dbReference type="KEGG" id="bmn:BMA10247_0200"/>
<dbReference type="PATRIC" id="fig|320389.8.peg.3150"/>
<dbReference type="GO" id="GO:0005829">
    <property type="term" value="C:cytosol"/>
    <property type="evidence" value="ECO:0007669"/>
    <property type="project" value="TreeGrafter"/>
</dbReference>
<dbReference type="GO" id="GO:0005524">
    <property type="term" value="F:ATP binding"/>
    <property type="evidence" value="ECO:0007669"/>
    <property type="project" value="UniProtKB-UniRule"/>
</dbReference>
<dbReference type="GO" id="GO:0036430">
    <property type="term" value="F:CMP kinase activity"/>
    <property type="evidence" value="ECO:0007669"/>
    <property type="project" value="RHEA"/>
</dbReference>
<dbReference type="GO" id="GO:0036431">
    <property type="term" value="F:dCMP kinase activity"/>
    <property type="evidence" value="ECO:0007669"/>
    <property type="project" value="RHEA"/>
</dbReference>
<dbReference type="GO" id="GO:0015949">
    <property type="term" value="P:nucleobase-containing small molecule interconversion"/>
    <property type="evidence" value="ECO:0007669"/>
    <property type="project" value="TreeGrafter"/>
</dbReference>
<dbReference type="GO" id="GO:0006220">
    <property type="term" value="P:pyrimidine nucleotide metabolic process"/>
    <property type="evidence" value="ECO:0007669"/>
    <property type="project" value="UniProtKB-UniRule"/>
</dbReference>
<dbReference type="CDD" id="cd02020">
    <property type="entry name" value="CMPK"/>
    <property type="match status" value="1"/>
</dbReference>
<dbReference type="Gene3D" id="3.40.50.300">
    <property type="entry name" value="P-loop containing nucleotide triphosphate hydrolases"/>
    <property type="match status" value="1"/>
</dbReference>
<dbReference type="HAMAP" id="MF_00238">
    <property type="entry name" value="Cytidyl_kinase_type1"/>
    <property type="match status" value="1"/>
</dbReference>
<dbReference type="InterPro" id="IPR003136">
    <property type="entry name" value="Cytidylate_kin"/>
</dbReference>
<dbReference type="InterPro" id="IPR011994">
    <property type="entry name" value="Cytidylate_kinase_dom"/>
</dbReference>
<dbReference type="InterPro" id="IPR027417">
    <property type="entry name" value="P-loop_NTPase"/>
</dbReference>
<dbReference type="NCBIfam" id="TIGR00017">
    <property type="entry name" value="cmk"/>
    <property type="match status" value="1"/>
</dbReference>
<dbReference type="PANTHER" id="PTHR21299:SF2">
    <property type="entry name" value="CYTIDYLATE KINASE"/>
    <property type="match status" value="1"/>
</dbReference>
<dbReference type="PANTHER" id="PTHR21299">
    <property type="entry name" value="CYTIDYLATE KINASE/PANTOATE-BETA-ALANINE LIGASE"/>
    <property type="match status" value="1"/>
</dbReference>
<dbReference type="Pfam" id="PF02224">
    <property type="entry name" value="Cytidylate_kin"/>
    <property type="match status" value="1"/>
</dbReference>
<dbReference type="SUPFAM" id="SSF52540">
    <property type="entry name" value="P-loop containing nucleoside triphosphate hydrolases"/>
    <property type="match status" value="1"/>
</dbReference>
<comment type="catalytic activity">
    <reaction evidence="1">
        <text>CMP + ATP = CDP + ADP</text>
        <dbReference type="Rhea" id="RHEA:11600"/>
        <dbReference type="ChEBI" id="CHEBI:30616"/>
        <dbReference type="ChEBI" id="CHEBI:58069"/>
        <dbReference type="ChEBI" id="CHEBI:60377"/>
        <dbReference type="ChEBI" id="CHEBI:456216"/>
        <dbReference type="EC" id="2.7.4.25"/>
    </reaction>
</comment>
<comment type="catalytic activity">
    <reaction evidence="1">
        <text>dCMP + ATP = dCDP + ADP</text>
        <dbReference type="Rhea" id="RHEA:25094"/>
        <dbReference type="ChEBI" id="CHEBI:30616"/>
        <dbReference type="ChEBI" id="CHEBI:57566"/>
        <dbReference type="ChEBI" id="CHEBI:58593"/>
        <dbReference type="ChEBI" id="CHEBI:456216"/>
        <dbReference type="EC" id="2.7.4.25"/>
    </reaction>
</comment>
<comment type="subcellular location">
    <subcellularLocation>
        <location evidence="1">Cytoplasm</location>
    </subcellularLocation>
</comment>
<comment type="similarity">
    <text evidence="1">Belongs to the cytidylate kinase family. Type 1 subfamily.</text>
</comment>